<keyword id="KW-1185">Reference proteome</keyword>
<keyword id="KW-0964">Secreted</keyword>
<keyword id="KW-0800">Toxin</keyword>
<name>HLYS_HYDVU</name>
<reference evidence="5 6" key="1">
    <citation type="journal article" date="2005" name="J. Biol. Chem.">
        <title>Hydralysins, a new category of beta-pore-forming toxins in cnidaria.</title>
        <authorList>
            <person name="Sher D."/>
            <person name="Fishman Y."/>
            <person name="Zhang M."/>
            <person name="Lebendiker M."/>
            <person name="Gaathon A."/>
            <person name="Mancheno J.-M."/>
            <person name="Zlotkin E."/>
        </authorList>
    </citation>
    <scope>NUCLEOTIDE SEQUENCE [MRNA]</scope>
    <scope>VARIANTS SER-105 AND ALA-211</scope>
</reference>
<proteinExistence type="evidence at transcript level"/>
<dbReference type="EMBL" id="AY967764">
    <property type="protein sequence ID" value="AAX89442.1"/>
    <property type="molecule type" value="mRNA"/>
</dbReference>
<dbReference type="SMR" id="Q52SK7"/>
<dbReference type="OrthoDB" id="6031150at2759"/>
<dbReference type="Proteomes" id="UP000694840">
    <property type="component" value="Unplaced"/>
</dbReference>
<dbReference type="GO" id="GO:0005576">
    <property type="term" value="C:extracellular region"/>
    <property type="evidence" value="ECO:0007669"/>
    <property type="project" value="UniProtKB-SubCell"/>
</dbReference>
<dbReference type="GO" id="GO:0090729">
    <property type="term" value="F:toxin activity"/>
    <property type="evidence" value="ECO:0007669"/>
    <property type="project" value="UniProtKB-KW"/>
</dbReference>
<dbReference type="CDD" id="cd21130">
    <property type="entry name" value="parasporin-2-like_N-term"/>
    <property type="match status" value="1"/>
</dbReference>
<dbReference type="CDD" id="cd20222">
    <property type="entry name" value="PFM_parasporin-2-like"/>
    <property type="match status" value="1"/>
</dbReference>
<dbReference type="Gene3D" id="2.60.40.3040">
    <property type="match status" value="1"/>
</dbReference>
<dbReference type="Gene3D" id="2.60.40.4280">
    <property type="match status" value="1"/>
</dbReference>
<dbReference type="Gene3D" id="3.10.290.50">
    <property type="match status" value="1"/>
</dbReference>
<dbReference type="SUPFAM" id="SSF56973">
    <property type="entry name" value="Aerolisin/ETX pore-forming domain"/>
    <property type="match status" value="1"/>
</dbReference>
<sequence length="244" mass="26128">MGKELLTFSDLSWLDSSPDSVRKAFTNSYGRTPDGISVNNETYFNAVKPAITEQYGHYCYKRTGQTKIVSQQLSDPTDAVLGSSIARNRGDSPVTLTVSVAGTWNDSTSWSTSAEAGVTMKSEFEVSGFFKTGAEFSVSVTAGKSGSSSVEKSSTSQIQVTVPPRSKVTVNMVGIMKKEKVCFEVPITVDGSFGANFGSSVQGHYFWFMSTDQALSKTSGIIKGTIDHASVFDVSTEIGPSEPL</sequence>
<organism>
    <name type="scientific">Hydra vulgaris</name>
    <name type="common">Hydra</name>
    <name type="synonym">Hydra attenuata</name>
    <dbReference type="NCBI Taxonomy" id="6087"/>
    <lineage>
        <taxon>Eukaryota</taxon>
        <taxon>Metazoa</taxon>
        <taxon>Cnidaria</taxon>
        <taxon>Hydrozoa</taxon>
        <taxon>Hydroidolina</taxon>
        <taxon>Anthoathecata</taxon>
        <taxon>Aplanulata</taxon>
        <taxon>Hydridae</taxon>
        <taxon>Hydra</taxon>
    </lineage>
</organism>
<feature type="initiator methionine" description="Removed" evidence="1">
    <location>
        <position position="1"/>
    </location>
</feature>
<feature type="chain" id="PRO_0000221561" description="Hydralysin">
    <location>
        <begin position="2"/>
        <end position="244"/>
    </location>
</feature>
<feature type="sequence variant" evidence="3">
    <original>N</original>
    <variation>S</variation>
    <location>
        <position position="105"/>
    </location>
</feature>
<feature type="sequence variant" evidence="3">
    <original>T</original>
    <variation>A</variation>
    <location>
        <position position="211"/>
    </location>
</feature>
<accession>Q52SK7</accession>
<protein>
    <recommendedName>
        <fullName>Hydralysin</fullName>
    </recommendedName>
</protein>
<evidence type="ECO:0000250" key="1"/>
<evidence type="ECO:0000250" key="2">
    <source>
        <dbReference type="UniProtKB" id="Q86LR2"/>
    </source>
</evidence>
<evidence type="ECO:0000269" key="3">
    <source>
    </source>
</evidence>
<evidence type="ECO:0000303" key="4">
    <source>
    </source>
</evidence>
<evidence type="ECO:0000305" key="5"/>
<evidence type="ECO:0000312" key="6">
    <source>
        <dbReference type="EMBL" id="AAX89442.1"/>
    </source>
</evidence>
<comment type="subcellular location">
    <subcellularLocation>
        <location evidence="2">Secreted</location>
    </subcellularLocation>
</comment>
<comment type="similarity">
    <text evidence="5">Belongs to the hydralysin family.</text>
</comment>
<gene>
    <name evidence="4" type="primary">Hln</name>
</gene>